<protein>
    <recommendedName>
        <fullName evidence="1">ATP-dependent Clp protease adapter protein ClpS</fullName>
    </recommendedName>
</protein>
<sequence>MGKAVNIEHVEERVESELMPPPMYKVILNNDDYTPMDFVIEVLQLFFKKNEQDATDIMLAIHNQGKGICGVFPFGIAETKVAQVNQFARQNQHPLLCSLEKA</sequence>
<comment type="function">
    <text evidence="1">Involved in the modulation of the specificity of the ClpAP-mediated ATP-dependent protein degradation.</text>
</comment>
<comment type="subunit">
    <text evidence="1">Binds to the N-terminal domain of the chaperone ClpA.</text>
</comment>
<comment type="similarity">
    <text evidence="1">Belongs to the ClpS family.</text>
</comment>
<dbReference type="EMBL" id="CP000821">
    <property type="protein sequence ID" value="ABV36496.1"/>
    <property type="molecule type" value="Genomic_DNA"/>
</dbReference>
<dbReference type="RefSeq" id="WP_012142232.1">
    <property type="nucleotide sequence ID" value="NC_009831.1"/>
</dbReference>
<dbReference type="SMR" id="A8FUH3"/>
<dbReference type="STRING" id="425104.Ssed_1885"/>
<dbReference type="KEGG" id="sse:Ssed_1885"/>
<dbReference type="eggNOG" id="COG2127">
    <property type="taxonomic scope" value="Bacteria"/>
</dbReference>
<dbReference type="HOGENOM" id="CLU_134358_2_1_6"/>
<dbReference type="OrthoDB" id="9796121at2"/>
<dbReference type="Proteomes" id="UP000002015">
    <property type="component" value="Chromosome"/>
</dbReference>
<dbReference type="GO" id="GO:0030163">
    <property type="term" value="P:protein catabolic process"/>
    <property type="evidence" value="ECO:0007669"/>
    <property type="project" value="InterPro"/>
</dbReference>
<dbReference type="GO" id="GO:0006508">
    <property type="term" value="P:proteolysis"/>
    <property type="evidence" value="ECO:0007669"/>
    <property type="project" value="UniProtKB-UniRule"/>
</dbReference>
<dbReference type="FunFam" id="3.30.1390.10:FF:000002">
    <property type="entry name" value="ATP-dependent Clp protease adapter protein ClpS"/>
    <property type="match status" value="1"/>
</dbReference>
<dbReference type="Gene3D" id="3.30.1390.10">
    <property type="match status" value="1"/>
</dbReference>
<dbReference type="HAMAP" id="MF_00302">
    <property type="entry name" value="ClpS"/>
    <property type="match status" value="1"/>
</dbReference>
<dbReference type="InterPro" id="IPR022935">
    <property type="entry name" value="ClpS"/>
</dbReference>
<dbReference type="InterPro" id="IPR003769">
    <property type="entry name" value="ClpS_core"/>
</dbReference>
<dbReference type="InterPro" id="IPR014719">
    <property type="entry name" value="Ribosomal_bL12_C/ClpS-like"/>
</dbReference>
<dbReference type="NCBIfam" id="NF000670">
    <property type="entry name" value="PRK00033.1-3"/>
    <property type="match status" value="1"/>
</dbReference>
<dbReference type="NCBIfam" id="NF000672">
    <property type="entry name" value="PRK00033.1-5"/>
    <property type="match status" value="1"/>
</dbReference>
<dbReference type="PANTHER" id="PTHR33473:SF19">
    <property type="entry name" value="ATP-DEPENDENT CLP PROTEASE ADAPTER PROTEIN CLPS"/>
    <property type="match status" value="1"/>
</dbReference>
<dbReference type="PANTHER" id="PTHR33473">
    <property type="entry name" value="ATP-DEPENDENT CLP PROTEASE ADAPTER PROTEIN CLPS1, CHLOROPLASTIC"/>
    <property type="match status" value="1"/>
</dbReference>
<dbReference type="Pfam" id="PF02617">
    <property type="entry name" value="ClpS"/>
    <property type="match status" value="1"/>
</dbReference>
<dbReference type="SUPFAM" id="SSF54736">
    <property type="entry name" value="ClpS-like"/>
    <property type="match status" value="1"/>
</dbReference>
<name>CLPS_SHESH</name>
<feature type="chain" id="PRO_1000079030" description="ATP-dependent Clp protease adapter protein ClpS">
    <location>
        <begin position="1"/>
        <end position="102"/>
    </location>
</feature>
<organism>
    <name type="scientific">Shewanella sediminis (strain HAW-EB3)</name>
    <dbReference type="NCBI Taxonomy" id="425104"/>
    <lineage>
        <taxon>Bacteria</taxon>
        <taxon>Pseudomonadati</taxon>
        <taxon>Pseudomonadota</taxon>
        <taxon>Gammaproteobacteria</taxon>
        <taxon>Alteromonadales</taxon>
        <taxon>Shewanellaceae</taxon>
        <taxon>Shewanella</taxon>
    </lineage>
</organism>
<evidence type="ECO:0000255" key="1">
    <source>
        <dbReference type="HAMAP-Rule" id="MF_00302"/>
    </source>
</evidence>
<keyword id="KW-1185">Reference proteome</keyword>
<accession>A8FUH3</accession>
<proteinExistence type="inferred from homology"/>
<reference key="1">
    <citation type="submission" date="2007-08" db="EMBL/GenBank/DDBJ databases">
        <title>Complete sequence of Shewanella sediminis HAW-EB3.</title>
        <authorList>
            <consortium name="US DOE Joint Genome Institute"/>
            <person name="Copeland A."/>
            <person name="Lucas S."/>
            <person name="Lapidus A."/>
            <person name="Barry K."/>
            <person name="Glavina del Rio T."/>
            <person name="Dalin E."/>
            <person name="Tice H."/>
            <person name="Pitluck S."/>
            <person name="Chertkov O."/>
            <person name="Brettin T."/>
            <person name="Bruce D."/>
            <person name="Detter J.C."/>
            <person name="Han C."/>
            <person name="Schmutz J."/>
            <person name="Larimer F."/>
            <person name="Land M."/>
            <person name="Hauser L."/>
            <person name="Kyrpides N."/>
            <person name="Kim E."/>
            <person name="Zhao J.-S."/>
            <person name="Richardson P."/>
        </authorList>
    </citation>
    <scope>NUCLEOTIDE SEQUENCE [LARGE SCALE GENOMIC DNA]</scope>
    <source>
        <strain>HAW-EB3</strain>
    </source>
</reference>
<gene>
    <name evidence="1" type="primary">clpS</name>
    <name type="ordered locus">Ssed_1885</name>
</gene>